<name>RUVA_MYCAP</name>
<dbReference type="EMBL" id="CU179680">
    <property type="protein sequence ID" value="CAL58921.1"/>
    <property type="molecule type" value="Genomic_DNA"/>
</dbReference>
<dbReference type="RefSeq" id="WP_011949402.1">
    <property type="nucleotide sequence ID" value="NC_009497.1"/>
</dbReference>
<dbReference type="SMR" id="A5IY12"/>
<dbReference type="STRING" id="347257.MAG2230"/>
<dbReference type="GeneID" id="93357990"/>
<dbReference type="KEGG" id="maa:MAG2230"/>
<dbReference type="HOGENOM" id="CLU_087936_1_1_14"/>
<dbReference type="Proteomes" id="UP000007065">
    <property type="component" value="Chromosome"/>
</dbReference>
<dbReference type="GO" id="GO:0005737">
    <property type="term" value="C:cytoplasm"/>
    <property type="evidence" value="ECO:0007669"/>
    <property type="project" value="UniProtKB-SubCell"/>
</dbReference>
<dbReference type="GO" id="GO:0009379">
    <property type="term" value="C:Holliday junction helicase complex"/>
    <property type="evidence" value="ECO:0007669"/>
    <property type="project" value="InterPro"/>
</dbReference>
<dbReference type="GO" id="GO:0048476">
    <property type="term" value="C:Holliday junction resolvase complex"/>
    <property type="evidence" value="ECO:0007669"/>
    <property type="project" value="UniProtKB-UniRule"/>
</dbReference>
<dbReference type="GO" id="GO:0005524">
    <property type="term" value="F:ATP binding"/>
    <property type="evidence" value="ECO:0007669"/>
    <property type="project" value="InterPro"/>
</dbReference>
<dbReference type="GO" id="GO:0000400">
    <property type="term" value="F:four-way junction DNA binding"/>
    <property type="evidence" value="ECO:0007669"/>
    <property type="project" value="UniProtKB-UniRule"/>
</dbReference>
<dbReference type="GO" id="GO:0009378">
    <property type="term" value="F:four-way junction helicase activity"/>
    <property type="evidence" value="ECO:0007669"/>
    <property type="project" value="InterPro"/>
</dbReference>
<dbReference type="GO" id="GO:0006310">
    <property type="term" value="P:DNA recombination"/>
    <property type="evidence" value="ECO:0007669"/>
    <property type="project" value="UniProtKB-UniRule"/>
</dbReference>
<dbReference type="GO" id="GO:0006281">
    <property type="term" value="P:DNA repair"/>
    <property type="evidence" value="ECO:0007669"/>
    <property type="project" value="UniProtKB-UniRule"/>
</dbReference>
<dbReference type="Gene3D" id="1.10.150.20">
    <property type="entry name" value="5' to 3' exonuclease, C-terminal subdomain"/>
    <property type="match status" value="1"/>
</dbReference>
<dbReference type="HAMAP" id="MF_00031">
    <property type="entry name" value="DNA_HJ_migration_RuvA"/>
    <property type="match status" value="1"/>
</dbReference>
<dbReference type="InterPro" id="IPR013849">
    <property type="entry name" value="DNA_helicase_Holl-junc_RuvA_I"/>
</dbReference>
<dbReference type="InterPro" id="IPR000085">
    <property type="entry name" value="RuvA"/>
</dbReference>
<dbReference type="InterPro" id="IPR010994">
    <property type="entry name" value="RuvA_2-like"/>
</dbReference>
<dbReference type="InterPro" id="IPR011114">
    <property type="entry name" value="RuvA_C"/>
</dbReference>
<dbReference type="NCBIfam" id="TIGR00084">
    <property type="entry name" value="ruvA"/>
    <property type="match status" value="1"/>
</dbReference>
<dbReference type="Pfam" id="PF14520">
    <property type="entry name" value="HHH_5"/>
    <property type="match status" value="1"/>
</dbReference>
<dbReference type="Pfam" id="PF07499">
    <property type="entry name" value="RuvA_C"/>
    <property type="match status" value="1"/>
</dbReference>
<dbReference type="Pfam" id="PF01330">
    <property type="entry name" value="RuvA_N"/>
    <property type="match status" value="1"/>
</dbReference>
<dbReference type="SUPFAM" id="SSF47781">
    <property type="entry name" value="RuvA domain 2-like"/>
    <property type="match status" value="1"/>
</dbReference>
<sequence length="198" mass="22459">MILYRIGEIIHKHNSNIIFESQGIGYSLILPDPERVEIKQKCKLYLFEIKNEYQYATYAFKDFKERLLFVDLISLNGIGPRAAFNILNFGFEKVVALIAEGNAEALIEIPYLNPRMARLIVAELQAKWSKMISPKDAAKINETTNTLSEVKETLKMVGFKTKQIDGALSKISSTDDVEKMIEEAIKLMSTQNYESATA</sequence>
<keyword id="KW-0963">Cytoplasm</keyword>
<keyword id="KW-0227">DNA damage</keyword>
<keyword id="KW-0233">DNA recombination</keyword>
<keyword id="KW-0234">DNA repair</keyword>
<keyword id="KW-0238">DNA-binding</keyword>
<keyword id="KW-1185">Reference proteome</keyword>
<accession>A5IY12</accession>
<reference key="1">
    <citation type="journal article" date="2007" name="PLoS Genet.">
        <title>Being pathogenic, plastic, and sexual while living with a nearly minimal bacterial genome.</title>
        <authorList>
            <person name="Sirand-Pugnet P."/>
            <person name="Lartigue C."/>
            <person name="Marenda M."/>
            <person name="Jacob D."/>
            <person name="Barre A."/>
            <person name="Barbe V."/>
            <person name="Schenowitz C."/>
            <person name="Mangenot S."/>
            <person name="Couloux A."/>
            <person name="Segurens B."/>
            <person name="de Daruvar A."/>
            <person name="Blanchard A."/>
            <person name="Citti C."/>
        </authorList>
    </citation>
    <scope>NUCLEOTIDE SEQUENCE [LARGE SCALE GENOMIC DNA]</scope>
    <source>
        <strain>NCTC 10123 / CIP 59.7 / PG2</strain>
    </source>
</reference>
<comment type="function">
    <text evidence="1">The RuvA-RuvB-RuvC complex processes Holliday junction (HJ) DNA during genetic recombination and DNA repair, while the RuvA-RuvB complex plays an important role in the rescue of blocked DNA replication forks via replication fork reversal (RFR). RuvA specifically binds to HJ cruciform DNA, conferring on it an open structure. The RuvB hexamer acts as an ATP-dependent pump, pulling dsDNA into and through the RuvAB complex. HJ branch migration allows RuvC to scan DNA until it finds its consensus sequence, where it cleaves and resolves the cruciform DNA.</text>
</comment>
<comment type="subunit">
    <text evidence="1">Homotetramer. Forms an RuvA(8)-RuvB(12)-Holliday junction (HJ) complex. HJ DNA is sandwiched between 2 RuvA tetramers; dsDNA enters through RuvA and exits via RuvB. An RuvB hexamer assembles on each DNA strand where it exits the tetramer. Each RuvB hexamer is contacted by two RuvA subunits (via domain III) on 2 adjacent RuvB subunits; this complex drives branch migration. In the full resolvosome a probable DNA-RuvA(4)-RuvB(12)-RuvC(2) complex forms which resolves the HJ.</text>
</comment>
<comment type="subcellular location">
    <subcellularLocation>
        <location evidence="1">Cytoplasm</location>
    </subcellularLocation>
</comment>
<comment type="domain">
    <text evidence="1">Has three domains with a flexible linker between the domains II and III and assumes an 'L' shape. Domain III is highly mobile and contacts RuvB.</text>
</comment>
<comment type="similarity">
    <text evidence="1">Belongs to the RuvA family.</text>
</comment>
<gene>
    <name evidence="1" type="primary">ruvA</name>
    <name type="ordered locus">MAG2230</name>
</gene>
<protein>
    <recommendedName>
        <fullName evidence="1">Holliday junction branch migration complex subunit RuvA</fullName>
    </recommendedName>
</protein>
<feature type="chain" id="PRO_1000090341" description="Holliday junction branch migration complex subunit RuvA">
    <location>
        <begin position="1"/>
        <end position="198"/>
    </location>
</feature>
<feature type="region of interest" description="Domain I" evidence="1">
    <location>
        <begin position="1"/>
        <end position="61"/>
    </location>
</feature>
<feature type="region of interest" description="Domain II" evidence="1">
    <location>
        <begin position="62"/>
        <end position="139"/>
    </location>
</feature>
<feature type="region of interest" description="Flexible linker" evidence="1">
    <location>
        <begin position="140"/>
        <end position="144"/>
    </location>
</feature>
<feature type="region of interest" description="Domain III" evidence="1">
    <location>
        <begin position="144"/>
        <end position="198"/>
    </location>
</feature>
<evidence type="ECO:0000255" key="1">
    <source>
        <dbReference type="HAMAP-Rule" id="MF_00031"/>
    </source>
</evidence>
<organism>
    <name type="scientific">Mycoplasmopsis agalactiae (strain NCTC 10123 / CIP 59.7 / PG2)</name>
    <name type="common">Mycoplasma agalactiae</name>
    <dbReference type="NCBI Taxonomy" id="347257"/>
    <lineage>
        <taxon>Bacteria</taxon>
        <taxon>Bacillati</taxon>
        <taxon>Mycoplasmatota</taxon>
        <taxon>Mycoplasmoidales</taxon>
        <taxon>Metamycoplasmataceae</taxon>
        <taxon>Mycoplasmopsis</taxon>
    </lineage>
</organism>
<proteinExistence type="inferred from homology"/>